<gene>
    <name type="ordered locus">MG321</name>
</gene>
<sequence>MKLKKRYLLLGSTLTVSAALILSACASSQLNKGVFFTSSSADLLKNNSVPLSMFNVSPTSSFFGNAYAGLTNYVATGTNRDDGVNVTDQIKEKLVLELALSVTGYKKTTHSGLKGRAQKNGSTDSSDGSSKNDYTKFNEWDAIGTIYRDSSKSITEDPNYHKITQEATRYEFTINTSLSWVDNAGREVKQNNQPVKLSSKDFERGFETYILSSNLGFNRNGYFIDLMGLDVEKTVGMDKTNGSSDGNGKGIEITDENYDVENYRSVDDNKFNVYLTSPFPFFLSMMSKEFFFPIPHTHPKVKALKLGKDSPLKYNQNNNRKILDQANTNFDGIYGGGVNAWKDTWSVGPYYVESFNQAQIVFKRNQIYDAIITPNLPKTRQENEKPIPAIVSYFQPGATPEVFYSSYIAGGLSASAVPYSQQQDARSRFNGTGDLRWLKIQKTAQSAQVTYSGKPYVANDSTVQLNANITETEAKFLYNSESEEALTIRAGINGLINWKNLAIIDLPNSGDVNYSTVPFGIFKEKPANGTSSGTNTDGIENDYYYKINNNQRLGLIPEQTGTFQKDKNVLDTATVKLSYYSSTKTNGAQVRTASTSGSSSQTSQVSSKQVSVTKQSFISALKKVGFTGNNPLHFNIKLGNASLSSNQVDYYNALKQALTELGNDNGENLIIPEIILGDAQGPTRNEWYIGLSSVLGFSYWSPDYDGVGTWLDAATQLNSEGIGEVITYNSGSHIVRTLLLAASQNNVFNQIENKLQNNTTTNGKDWCSCITSADLFKDDPYVIKNFGTNGNNGTSASLAFTKKALSLLKFLVDNKVLKADKVKEAIKDPDKYLSKRSKIDDNKPANVSDIHIGYELKDLYDNAAQLNRFNSIWAEQDTDNAKFLITVVDSYFPVLPVSAPGLNETIPSLLKPWFSLRNAPSGIATMRDSGYIDE</sequence>
<comment type="subcellular location">
    <subcellularLocation>
        <location evidence="1">Cell membrane</location>
        <topology evidence="1">Lipid-anchor</topology>
    </subcellularLocation>
</comment>
<evidence type="ECO:0000255" key="1">
    <source>
        <dbReference type="PROSITE-ProRule" id="PRU00303"/>
    </source>
</evidence>
<evidence type="ECO:0000256" key="2">
    <source>
        <dbReference type="SAM" id="MobiDB-lite"/>
    </source>
</evidence>
<reference key="1">
    <citation type="journal article" date="1995" name="Science">
        <title>The minimal gene complement of Mycoplasma genitalium.</title>
        <authorList>
            <person name="Fraser C.M."/>
            <person name="Gocayne J.D."/>
            <person name="White O."/>
            <person name="Adams M.D."/>
            <person name="Clayton R.A."/>
            <person name="Fleischmann R.D."/>
            <person name="Bult C.J."/>
            <person name="Kerlavage A.R."/>
            <person name="Sutton G.G."/>
            <person name="Kelley J.M."/>
            <person name="Fritchman J.L."/>
            <person name="Weidman J.F."/>
            <person name="Small K.V."/>
            <person name="Sandusky M."/>
            <person name="Fuhrmann J.L."/>
            <person name="Nguyen D.T."/>
            <person name="Utterback T.R."/>
            <person name="Saudek D.M."/>
            <person name="Phillips C.A."/>
            <person name="Merrick J.M."/>
            <person name="Tomb J.-F."/>
            <person name="Dougherty B.A."/>
            <person name="Bott K.F."/>
            <person name="Hu P.-C."/>
            <person name="Lucier T.S."/>
            <person name="Peterson S.N."/>
            <person name="Smith H.O."/>
            <person name="Hutchison C.A. III"/>
            <person name="Venter J.C."/>
        </authorList>
    </citation>
    <scope>NUCLEOTIDE SEQUENCE [LARGE SCALE GENOMIC DNA]</scope>
    <source>
        <strain>ATCC 33530 / DSM 19775 / NCTC 10195 / G37</strain>
    </source>
</reference>
<accession>P47563</accession>
<proteinExistence type="inferred from homology"/>
<protein>
    <recommendedName>
        <fullName>Uncharacterized lipoprotein MG321</fullName>
    </recommendedName>
</protein>
<organism>
    <name type="scientific">Mycoplasma genitalium (strain ATCC 33530 / DSM 19775 / NCTC 10195 / G37)</name>
    <name type="common">Mycoplasmoides genitalium</name>
    <dbReference type="NCBI Taxonomy" id="243273"/>
    <lineage>
        <taxon>Bacteria</taxon>
        <taxon>Bacillati</taxon>
        <taxon>Mycoplasmatota</taxon>
        <taxon>Mycoplasmoidales</taxon>
        <taxon>Mycoplasmoidaceae</taxon>
        <taxon>Mycoplasmoides</taxon>
    </lineage>
</organism>
<dbReference type="EMBL" id="L43967">
    <property type="protein sequence ID" value="AAC71543.1"/>
    <property type="molecule type" value="Genomic_DNA"/>
</dbReference>
<dbReference type="PIR" id="E64235">
    <property type="entry name" value="E64235"/>
</dbReference>
<dbReference type="RefSeq" id="WP_010869430.1">
    <property type="nucleotide sequence ID" value="NC_000908.2"/>
</dbReference>
<dbReference type="STRING" id="243273.MG_321"/>
<dbReference type="GeneID" id="88282486"/>
<dbReference type="KEGG" id="mge:MG_321"/>
<dbReference type="eggNOG" id="COG0747">
    <property type="taxonomic scope" value="Bacteria"/>
</dbReference>
<dbReference type="HOGENOM" id="CLU_313491_0_0_14"/>
<dbReference type="InParanoid" id="P47563"/>
<dbReference type="Proteomes" id="UP000000807">
    <property type="component" value="Chromosome"/>
</dbReference>
<dbReference type="GO" id="GO:0005886">
    <property type="term" value="C:plasma membrane"/>
    <property type="evidence" value="ECO:0007669"/>
    <property type="project" value="UniProtKB-SubCell"/>
</dbReference>
<dbReference type="Gene3D" id="3.40.190.10">
    <property type="entry name" value="Periplasmic binding protein-like II"/>
    <property type="match status" value="1"/>
</dbReference>
<dbReference type="InterPro" id="IPR035158">
    <property type="entry name" value="DUF5396"/>
</dbReference>
<dbReference type="Pfam" id="PF17374">
    <property type="entry name" value="DUF5396"/>
    <property type="match status" value="2"/>
</dbReference>
<dbReference type="SUPFAM" id="SSF53850">
    <property type="entry name" value="Periplasmic binding protein-like II"/>
    <property type="match status" value="1"/>
</dbReference>
<dbReference type="PROSITE" id="PS51257">
    <property type="entry name" value="PROKAR_LIPOPROTEIN"/>
    <property type="match status" value="1"/>
</dbReference>
<feature type="signal peptide" evidence="1">
    <location>
        <begin position="1"/>
        <end position="24"/>
    </location>
</feature>
<feature type="chain" id="PRO_0000014034" description="Uncharacterized lipoprotein MG321">
    <location>
        <begin position="25"/>
        <end position="934"/>
    </location>
</feature>
<feature type="region of interest" description="Disordered" evidence="2">
    <location>
        <begin position="111"/>
        <end position="131"/>
    </location>
</feature>
<feature type="compositionally biased region" description="Polar residues" evidence="2">
    <location>
        <begin position="119"/>
        <end position="131"/>
    </location>
</feature>
<feature type="lipid moiety-binding region" description="N-palmitoyl cysteine" evidence="1">
    <location>
        <position position="25"/>
    </location>
</feature>
<feature type="lipid moiety-binding region" description="S-diacylglycerol cysteine" evidence="1">
    <location>
        <position position="25"/>
    </location>
</feature>
<name>Y321_MYCGE</name>
<keyword id="KW-1003">Cell membrane</keyword>
<keyword id="KW-0449">Lipoprotein</keyword>
<keyword id="KW-0472">Membrane</keyword>
<keyword id="KW-0564">Palmitate</keyword>
<keyword id="KW-1185">Reference proteome</keyword>
<keyword id="KW-0732">Signal</keyword>